<accession>C5D4X9</accession>
<name>MTNN_GEOSW</name>
<dbReference type="EC" id="3.2.2.9" evidence="1"/>
<dbReference type="EMBL" id="CP001638">
    <property type="protein sequence ID" value="ACS25171.1"/>
    <property type="molecule type" value="Genomic_DNA"/>
</dbReference>
<dbReference type="SMR" id="C5D4X9"/>
<dbReference type="STRING" id="471223.GWCH70_2476"/>
<dbReference type="KEGG" id="gwc:GWCH70_2476"/>
<dbReference type="eggNOG" id="COG0775">
    <property type="taxonomic scope" value="Bacteria"/>
</dbReference>
<dbReference type="HOGENOM" id="CLU_031248_2_2_9"/>
<dbReference type="OrthoDB" id="9792278at2"/>
<dbReference type="UniPathway" id="UPA00904">
    <property type="reaction ID" value="UER00871"/>
</dbReference>
<dbReference type="GO" id="GO:0005829">
    <property type="term" value="C:cytosol"/>
    <property type="evidence" value="ECO:0007669"/>
    <property type="project" value="TreeGrafter"/>
</dbReference>
<dbReference type="GO" id="GO:0008782">
    <property type="term" value="F:adenosylhomocysteine nucleosidase activity"/>
    <property type="evidence" value="ECO:0007669"/>
    <property type="project" value="UniProtKB-UniRule"/>
</dbReference>
<dbReference type="GO" id="GO:0008930">
    <property type="term" value="F:methylthioadenosine nucleosidase activity"/>
    <property type="evidence" value="ECO:0007669"/>
    <property type="project" value="UniProtKB-UniRule"/>
</dbReference>
<dbReference type="GO" id="GO:0019509">
    <property type="term" value="P:L-methionine salvage from methylthioadenosine"/>
    <property type="evidence" value="ECO:0007669"/>
    <property type="project" value="UniProtKB-UniRule"/>
</dbReference>
<dbReference type="GO" id="GO:0019284">
    <property type="term" value="P:L-methionine salvage from S-adenosylmethionine"/>
    <property type="evidence" value="ECO:0007669"/>
    <property type="project" value="TreeGrafter"/>
</dbReference>
<dbReference type="GO" id="GO:0009164">
    <property type="term" value="P:nucleoside catabolic process"/>
    <property type="evidence" value="ECO:0007669"/>
    <property type="project" value="InterPro"/>
</dbReference>
<dbReference type="CDD" id="cd09008">
    <property type="entry name" value="MTAN"/>
    <property type="match status" value="1"/>
</dbReference>
<dbReference type="FunFam" id="3.40.50.1580:FF:000001">
    <property type="entry name" value="MTA/SAH nucleosidase family protein"/>
    <property type="match status" value="1"/>
</dbReference>
<dbReference type="Gene3D" id="3.40.50.1580">
    <property type="entry name" value="Nucleoside phosphorylase domain"/>
    <property type="match status" value="1"/>
</dbReference>
<dbReference type="HAMAP" id="MF_01684">
    <property type="entry name" value="Salvage_MtnN"/>
    <property type="match status" value="1"/>
</dbReference>
<dbReference type="InterPro" id="IPR010049">
    <property type="entry name" value="MTA_SAH_Nsdase"/>
</dbReference>
<dbReference type="InterPro" id="IPR000845">
    <property type="entry name" value="Nucleoside_phosphorylase_d"/>
</dbReference>
<dbReference type="InterPro" id="IPR035994">
    <property type="entry name" value="Nucleoside_phosphorylase_sf"/>
</dbReference>
<dbReference type="NCBIfam" id="TIGR01704">
    <property type="entry name" value="MTA_SAH-Nsdase"/>
    <property type="match status" value="1"/>
</dbReference>
<dbReference type="NCBIfam" id="NF004079">
    <property type="entry name" value="PRK05584.1"/>
    <property type="match status" value="1"/>
</dbReference>
<dbReference type="PANTHER" id="PTHR46832">
    <property type="entry name" value="5'-METHYLTHIOADENOSINE/S-ADENOSYLHOMOCYSTEINE NUCLEOSIDASE"/>
    <property type="match status" value="1"/>
</dbReference>
<dbReference type="PANTHER" id="PTHR46832:SF1">
    <property type="entry name" value="5'-METHYLTHIOADENOSINE_S-ADENOSYLHOMOCYSTEINE NUCLEOSIDASE"/>
    <property type="match status" value="1"/>
</dbReference>
<dbReference type="Pfam" id="PF01048">
    <property type="entry name" value="PNP_UDP_1"/>
    <property type="match status" value="1"/>
</dbReference>
<dbReference type="SUPFAM" id="SSF53167">
    <property type="entry name" value="Purine and uridine phosphorylases"/>
    <property type="match status" value="1"/>
</dbReference>
<evidence type="ECO:0000255" key="1">
    <source>
        <dbReference type="HAMAP-Rule" id="MF_01684"/>
    </source>
</evidence>
<sequence length="232" mass="25073">MKIAIIGAMEEEVTILRDKIEEREETVIANCEFSTGRLNGADVILLKSGIGKVNAAMSTAILLERFRPDYVINTGSAGGFLSTLNVGDVVISNEVVHHDVDVTAFGYEYGQVPGMPARYKADETLVKIAEQNAKQIKDIQVVTGLIATGDSFMNDPARVEFVRSKFPELCAAEMEAAAIAQVCTQFAVPFVIIRALSDIAGKESNVSFEQFLDTAAKHSADLVLSIVSSLQK</sequence>
<comment type="function">
    <text evidence="1">Catalyzes the irreversible cleavage of the glycosidic bond in both 5'-methylthioadenosine (MTA) and S-adenosylhomocysteine (SAH/AdoHcy) to adenine and the corresponding thioribose, 5'-methylthioribose and S-ribosylhomocysteine, respectively. Also cleaves 5'-deoxyadenosine, a toxic by-product of radical S-adenosylmethionine (SAM) enzymes, into 5-deoxyribose and adenine.</text>
</comment>
<comment type="catalytic activity">
    <reaction evidence="1">
        <text>S-adenosyl-L-homocysteine + H2O = S-(5-deoxy-D-ribos-5-yl)-L-homocysteine + adenine</text>
        <dbReference type="Rhea" id="RHEA:17805"/>
        <dbReference type="ChEBI" id="CHEBI:15377"/>
        <dbReference type="ChEBI" id="CHEBI:16708"/>
        <dbReference type="ChEBI" id="CHEBI:57856"/>
        <dbReference type="ChEBI" id="CHEBI:58195"/>
        <dbReference type="EC" id="3.2.2.9"/>
    </reaction>
</comment>
<comment type="catalytic activity">
    <reaction evidence="1">
        <text>S-methyl-5'-thioadenosine + H2O = 5-(methylsulfanyl)-D-ribose + adenine</text>
        <dbReference type="Rhea" id="RHEA:13617"/>
        <dbReference type="ChEBI" id="CHEBI:15377"/>
        <dbReference type="ChEBI" id="CHEBI:16708"/>
        <dbReference type="ChEBI" id="CHEBI:17509"/>
        <dbReference type="ChEBI" id="CHEBI:78440"/>
        <dbReference type="EC" id="3.2.2.9"/>
    </reaction>
</comment>
<comment type="catalytic activity">
    <reaction evidence="1">
        <text>5'-deoxyadenosine + H2O = 5-deoxy-D-ribose + adenine</text>
        <dbReference type="Rhea" id="RHEA:29859"/>
        <dbReference type="ChEBI" id="CHEBI:15377"/>
        <dbReference type="ChEBI" id="CHEBI:16708"/>
        <dbReference type="ChEBI" id="CHEBI:17319"/>
        <dbReference type="ChEBI" id="CHEBI:149540"/>
        <dbReference type="EC" id="3.2.2.9"/>
    </reaction>
    <physiologicalReaction direction="left-to-right" evidence="1">
        <dbReference type="Rhea" id="RHEA:29860"/>
    </physiologicalReaction>
</comment>
<comment type="pathway">
    <text evidence="1">Amino-acid biosynthesis; L-methionine biosynthesis via salvage pathway; S-methyl-5-thio-alpha-D-ribose 1-phosphate from S-methyl-5'-thioadenosine (hydrolase route): step 1/2.</text>
</comment>
<comment type="similarity">
    <text evidence="1">Belongs to the PNP/UDP phosphorylase family. MtnN subfamily.</text>
</comment>
<feature type="chain" id="PRO_1000215912" description="5'-methylthioadenosine/S-adenosylhomocysteine nucleosidase">
    <location>
        <begin position="1"/>
        <end position="232"/>
    </location>
</feature>
<feature type="active site" description="Proton acceptor" evidence="1">
    <location>
        <position position="12"/>
    </location>
</feature>
<feature type="active site" description="Proton donor" evidence="1">
    <location>
        <position position="198"/>
    </location>
</feature>
<feature type="binding site" evidence="1">
    <location>
        <position position="78"/>
    </location>
    <ligand>
        <name>substrate</name>
    </ligand>
</feature>
<feature type="binding site" evidence="1">
    <location>
        <position position="153"/>
    </location>
    <ligand>
        <name>substrate</name>
    </ligand>
</feature>
<feature type="binding site" evidence="1">
    <location>
        <begin position="174"/>
        <end position="175"/>
    </location>
    <ligand>
        <name>substrate</name>
    </ligand>
</feature>
<keyword id="KW-0028">Amino-acid biosynthesis</keyword>
<keyword id="KW-0378">Hydrolase</keyword>
<keyword id="KW-0486">Methionine biosynthesis</keyword>
<gene>
    <name evidence="1" type="primary">mtnN</name>
    <name type="ordered locus">GWCH70_2476</name>
</gene>
<organism>
    <name type="scientific">Geobacillus sp. (strain WCH70)</name>
    <dbReference type="NCBI Taxonomy" id="471223"/>
    <lineage>
        <taxon>Bacteria</taxon>
        <taxon>Bacillati</taxon>
        <taxon>Bacillota</taxon>
        <taxon>Bacilli</taxon>
        <taxon>Bacillales</taxon>
        <taxon>Anoxybacillaceae</taxon>
        <taxon>Geobacillus</taxon>
    </lineage>
</organism>
<proteinExistence type="inferred from homology"/>
<protein>
    <recommendedName>
        <fullName evidence="1">5'-methylthioadenosine/S-adenosylhomocysteine nucleosidase</fullName>
        <shortName evidence="1">MTA/SAH nucleosidase</shortName>
        <shortName evidence="1">MTAN</shortName>
        <ecNumber evidence="1">3.2.2.9</ecNumber>
    </recommendedName>
    <alternativeName>
        <fullName evidence="1">5'-deoxyadenosine nucleosidase</fullName>
        <shortName evidence="1">DOA nucleosidase</shortName>
        <shortName evidence="1">dAdo nucleosidase</shortName>
    </alternativeName>
    <alternativeName>
        <fullName evidence="1">5'-methylthioadenosine nucleosidase</fullName>
        <shortName evidence="1">MTA nucleosidase</shortName>
    </alternativeName>
    <alternativeName>
        <fullName evidence="1">S-adenosylhomocysteine nucleosidase</fullName>
        <shortName evidence="1">AdoHcy nucleosidase</shortName>
        <shortName evidence="1">SAH nucleosidase</shortName>
        <shortName evidence="1">SRH nucleosidase</shortName>
    </alternativeName>
</protein>
<reference key="1">
    <citation type="submission" date="2009-06" db="EMBL/GenBank/DDBJ databases">
        <title>Complete sequence of chromosome of Geopacillus sp. WCH70.</title>
        <authorList>
            <consortium name="US DOE Joint Genome Institute"/>
            <person name="Lucas S."/>
            <person name="Copeland A."/>
            <person name="Lapidus A."/>
            <person name="Glavina del Rio T."/>
            <person name="Dalin E."/>
            <person name="Tice H."/>
            <person name="Bruce D."/>
            <person name="Goodwin L."/>
            <person name="Pitluck S."/>
            <person name="Chertkov O."/>
            <person name="Brettin T."/>
            <person name="Detter J.C."/>
            <person name="Han C."/>
            <person name="Larimer F."/>
            <person name="Land M."/>
            <person name="Hauser L."/>
            <person name="Kyrpides N."/>
            <person name="Mikhailova N."/>
            <person name="Brumm P."/>
            <person name="Mead D.A."/>
            <person name="Richardson P."/>
        </authorList>
    </citation>
    <scope>NUCLEOTIDE SEQUENCE [LARGE SCALE GENOMIC DNA]</scope>
    <source>
        <strain>WCH70</strain>
    </source>
</reference>